<comment type="function">
    <text evidence="1">Forms part of the ribosomal stalk which helps the ribosome interact with GTP-bound translation factors. Is thus essential for accurate translation.</text>
</comment>
<comment type="subunit">
    <text evidence="1">Homodimer. Part of the ribosomal stalk of the 50S ribosomal subunit. Forms a multimeric L10(L12)X complex, where L10 forms an elongated spine to which 2 to 4 L12 dimers bind in a sequential fashion. Binds GTP-bound translation factors.</text>
</comment>
<comment type="similarity">
    <text evidence="1">Belongs to the bacterial ribosomal protein bL12 family.</text>
</comment>
<gene>
    <name evidence="1" type="primary">rplL</name>
    <name type="ordered locus">Lm4b_00271</name>
</gene>
<keyword id="KW-0687">Ribonucleoprotein</keyword>
<keyword id="KW-0689">Ribosomal protein</keyword>
<dbReference type="EMBL" id="FM242711">
    <property type="protein sequence ID" value="CAS04038.1"/>
    <property type="molecule type" value="Genomic_DNA"/>
</dbReference>
<dbReference type="RefSeq" id="WP_003726839.1">
    <property type="nucleotide sequence ID" value="NC_012488.1"/>
</dbReference>
<dbReference type="SMR" id="C1KYI3"/>
<dbReference type="KEGG" id="lmc:Lm4b_00271"/>
<dbReference type="HOGENOM" id="CLU_086499_3_2_9"/>
<dbReference type="GO" id="GO:0022625">
    <property type="term" value="C:cytosolic large ribosomal subunit"/>
    <property type="evidence" value="ECO:0007669"/>
    <property type="project" value="TreeGrafter"/>
</dbReference>
<dbReference type="GO" id="GO:0003729">
    <property type="term" value="F:mRNA binding"/>
    <property type="evidence" value="ECO:0007669"/>
    <property type="project" value="TreeGrafter"/>
</dbReference>
<dbReference type="GO" id="GO:0003735">
    <property type="term" value="F:structural constituent of ribosome"/>
    <property type="evidence" value="ECO:0007669"/>
    <property type="project" value="InterPro"/>
</dbReference>
<dbReference type="GO" id="GO:0006412">
    <property type="term" value="P:translation"/>
    <property type="evidence" value="ECO:0007669"/>
    <property type="project" value="UniProtKB-UniRule"/>
</dbReference>
<dbReference type="CDD" id="cd00387">
    <property type="entry name" value="Ribosomal_L7_L12"/>
    <property type="match status" value="1"/>
</dbReference>
<dbReference type="FunFam" id="1.20.5.710:FF:000002">
    <property type="entry name" value="50S ribosomal protein L7/L12"/>
    <property type="match status" value="1"/>
</dbReference>
<dbReference type="FunFam" id="3.30.1390.10:FF:000001">
    <property type="entry name" value="50S ribosomal protein L7/L12"/>
    <property type="match status" value="1"/>
</dbReference>
<dbReference type="Gene3D" id="3.30.1390.10">
    <property type="match status" value="1"/>
</dbReference>
<dbReference type="Gene3D" id="1.20.5.710">
    <property type="entry name" value="Single helix bin"/>
    <property type="match status" value="1"/>
</dbReference>
<dbReference type="HAMAP" id="MF_00368">
    <property type="entry name" value="Ribosomal_bL12"/>
    <property type="match status" value="1"/>
</dbReference>
<dbReference type="InterPro" id="IPR000206">
    <property type="entry name" value="Ribosomal_bL12"/>
</dbReference>
<dbReference type="InterPro" id="IPR013823">
    <property type="entry name" value="Ribosomal_bL12_C"/>
</dbReference>
<dbReference type="InterPro" id="IPR014719">
    <property type="entry name" value="Ribosomal_bL12_C/ClpS-like"/>
</dbReference>
<dbReference type="InterPro" id="IPR008932">
    <property type="entry name" value="Ribosomal_bL12_oligo"/>
</dbReference>
<dbReference type="InterPro" id="IPR036235">
    <property type="entry name" value="Ribosomal_bL12_oligo_N_sf"/>
</dbReference>
<dbReference type="NCBIfam" id="TIGR00855">
    <property type="entry name" value="L12"/>
    <property type="match status" value="1"/>
</dbReference>
<dbReference type="PANTHER" id="PTHR45987">
    <property type="entry name" value="39S RIBOSOMAL PROTEIN L12"/>
    <property type="match status" value="1"/>
</dbReference>
<dbReference type="PANTHER" id="PTHR45987:SF4">
    <property type="entry name" value="LARGE RIBOSOMAL SUBUNIT PROTEIN BL12M"/>
    <property type="match status" value="1"/>
</dbReference>
<dbReference type="Pfam" id="PF00542">
    <property type="entry name" value="Ribosomal_L12"/>
    <property type="match status" value="1"/>
</dbReference>
<dbReference type="Pfam" id="PF16320">
    <property type="entry name" value="Ribosomal_L12_N"/>
    <property type="match status" value="1"/>
</dbReference>
<dbReference type="SUPFAM" id="SSF54736">
    <property type="entry name" value="ClpS-like"/>
    <property type="match status" value="1"/>
</dbReference>
<dbReference type="SUPFAM" id="SSF48300">
    <property type="entry name" value="Ribosomal protein L7/12, oligomerisation (N-terminal) domain"/>
    <property type="match status" value="1"/>
</dbReference>
<feature type="chain" id="PRO_1000205563" description="Large ribosomal subunit protein bL12">
    <location>
        <begin position="1"/>
        <end position="120"/>
    </location>
</feature>
<organism>
    <name type="scientific">Listeria monocytogenes serotype 4b (strain CLIP80459)</name>
    <dbReference type="NCBI Taxonomy" id="568819"/>
    <lineage>
        <taxon>Bacteria</taxon>
        <taxon>Bacillati</taxon>
        <taxon>Bacillota</taxon>
        <taxon>Bacilli</taxon>
        <taxon>Bacillales</taxon>
        <taxon>Listeriaceae</taxon>
        <taxon>Listeria</taxon>
    </lineage>
</organism>
<reference key="1">
    <citation type="journal article" date="2012" name="BMC Genomics">
        <title>Comparative genomics and transcriptomics of lineages I, II, and III strains of Listeria monocytogenes.</title>
        <authorList>
            <person name="Hain T."/>
            <person name="Ghai R."/>
            <person name="Billion A."/>
            <person name="Kuenne C.T."/>
            <person name="Steinweg C."/>
            <person name="Izar B."/>
            <person name="Mohamed W."/>
            <person name="Mraheil M."/>
            <person name="Domann E."/>
            <person name="Schaffrath S."/>
            <person name="Karst U."/>
            <person name="Goesmann A."/>
            <person name="Oehm S."/>
            <person name="Puhler A."/>
            <person name="Merkl R."/>
            <person name="Vorwerk S."/>
            <person name="Glaser P."/>
            <person name="Garrido P."/>
            <person name="Rusniok C."/>
            <person name="Buchrieser C."/>
            <person name="Goebel W."/>
            <person name="Chakraborty T."/>
        </authorList>
    </citation>
    <scope>NUCLEOTIDE SEQUENCE [LARGE SCALE GENOMIC DNA]</scope>
    <source>
        <strain>CLIP80459</strain>
    </source>
</reference>
<proteinExistence type="inferred from homology"/>
<sequence>MALNIEEIIASVKEASVLELNDLVKAIEEEFGVTAAAPVAVAAAGGAAAEQTEFTVELASAGDSKIKVIKVVREITGLGLKEAKELVDNAPKALKEGVAKEEAEEIKAKLEEVGANVEVK</sequence>
<name>RL7_LISMC</name>
<protein>
    <recommendedName>
        <fullName evidence="1">Large ribosomal subunit protein bL12</fullName>
    </recommendedName>
    <alternativeName>
        <fullName evidence="2">50S ribosomal protein L7/L12</fullName>
    </alternativeName>
</protein>
<evidence type="ECO:0000255" key="1">
    <source>
        <dbReference type="HAMAP-Rule" id="MF_00368"/>
    </source>
</evidence>
<evidence type="ECO:0000305" key="2"/>
<accession>C1KYI3</accession>